<name>RL34_META3</name>
<protein>
    <recommendedName>
        <fullName evidence="1">Large ribosomal subunit protein eL34</fullName>
    </recommendedName>
    <alternativeName>
        <fullName evidence="3">50S ribosomal protein L34e</fullName>
    </alternativeName>
</protein>
<accession>A6UW33</accession>
<evidence type="ECO:0000255" key="1">
    <source>
        <dbReference type="HAMAP-Rule" id="MF_00349"/>
    </source>
</evidence>
<evidence type="ECO:0000256" key="2">
    <source>
        <dbReference type="SAM" id="MobiDB-lite"/>
    </source>
</evidence>
<evidence type="ECO:0000305" key="3"/>
<reference key="1">
    <citation type="submission" date="2007-06" db="EMBL/GenBank/DDBJ databases">
        <title>Complete sequence of Methanococcus aeolicus Nankai-3.</title>
        <authorList>
            <consortium name="US DOE Joint Genome Institute"/>
            <person name="Copeland A."/>
            <person name="Lucas S."/>
            <person name="Lapidus A."/>
            <person name="Barry K."/>
            <person name="Glavina del Rio T."/>
            <person name="Dalin E."/>
            <person name="Tice H."/>
            <person name="Pitluck S."/>
            <person name="Chain P."/>
            <person name="Malfatti S."/>
            <person name="Shin M."/>
            <person name="Vergez L."/>
            <person name="Schmutz J."/>
            <person name="Larimer F."/>
            <person name="Land M."/>
            <person name="Hauser L."/>
            <person name="Kyrpides N."/>
            <person name="Lykidis A."/>
            <person name="Sieprawska-Lupa M."/>
            <person name="Whitman W.B."/>
            <person name="Richardson P."/>
        </authorList>
    </citation>
    <scope>NUCLEOTIDE SEQUENCE [LARGE SCALE GENOMIC DNA]</scope>
    <source>
        <strain>ATCC BAA-1280 / DSM 17508 / OCM 812 / Nankai-3</strain>
    </source>
</reference>
<feature type="chain" id="PRO_1000133407" description="Large ribosomal subunit protein eL34">
    <location>
        <begin position="1"/>
        <end position="89"/>
    </location>
</feature>
<feature type="region of interest" description="Disordered" evidence="2">
    <location>
        <begin position="1"/>
        <end position="32"/>
    </location>
</feature>
<gene>
    <name evidence="1" type="primary">rpl34e</name>
    <name type="ordered locus">Maeo_1128</name>
</gene>
<keyword id="KW-0687">Ribonucleoprotein</keyword>
<keyword id="KW-0689">Ribosomal protein</keyword>
<proteinExistence type="inferred from homology"/>
<organism>
    <name type="scientific">Methanococcus aeolicus (strain ATCC BAA-1280 / DSM 17508 / OCM 812 / Nankai-3)</name>
    <dbReference type="NCBI Taxonomy" id="419665"/>
    <lineage>
        <taxon>Archaea</taxon>
        <taxon>Methanobacteriati</taxon>
        <taxon>Methanobacteriota</taxon>
        <taxon>Methanomada group</taxon>
        <taxon>Methanococci</taxon>
        <taxon>Methanococcales</taxon>
        <taxon>Methanococcaceae</taxon>
        <taxon>Methanococcus</taxon>
    </lineage>
</organism>
<comment type="similarity">
    <text evidence="1">Belongs to the eukaryotic ribosomal protein eL34 family.</text>
</comment>
<dbReference type="EMBL" id="CP000743">
    <property type="protein sequence ID" value="ABR56705.1"/>
    <property type="molecule type" value="Genomic_DNA"/>
</dbReference>
<dbReference type="RefSeq" id="WP_011973837.1">
    <property type="nucleotide sequence ID" value="NC_009635.1"/>
</dbReference>
<dbReference type="SMR" id="A6UW33"/>
<dbReference type="STRING" id="419665.Maeo_1128"/>
<dbReference type="GeneID" id="5327334"/>
<dbReference type="KEGG" id="mae:Maeo_1128"/>
<dbReference type="eggNOG" id="arCOG04168">
    <property type="taxonomic scope" value="Archaea"/>
</dbReference>
<dbReference type="HOGENOM" id="CLU_118652_2_0_2"/>
<dbReference type="OrthoDB" id="43096at2157"/>
<dbReference type="Proteomes" id="UP000001106">
    <property type="component" value="Chromosome"/>
</dbReference>
<dbReference type="GO" id="GO:1990904">
    <property type="term" value="C:ribonucleoprotein complex"/>
    <property type="evidence" value="ECO:0007669"/>
    <property type="project" value="UniProtKB-KW"/>
</dbReference>
<dbReference type="GO" id="GO:0005840">
    <property type="term" value="C:ribosome"/>
    <property type="evidence" value="ECO:0007669"/>
    <property type="project" value="UniProtKB-KW"/>
</dbReference>
<dbReference type="GO" id="GO:0003735">
    <property type="term" value="F:structural constituent of ribosome"/>
    <property type="evidence" value="ECO:0007669"/>
    <property type="project" value="InterPro"/>
</dbReference>
<dbReference type="GO" id="GO:0006412">
    <property type="term" value="P:translation"/>
    <property type="evidence" value="ECO:0007669"/>
    <property type="project" value="UniProtKB-UniRule"/>
</dbReference>
<dbReference type="Gene3D" id="6.20.340.10">
    <property type="match status" value="1"/>
</dbReference>
<dbReference type="HAMAP" id="MF_00349">
    <property type="entry name" value="Ribosomal_eL34"/>
    <property type="match status" value="1"/>
</dbReference>
<dbReference type="InterPro" id="IPR008195">
    <property type="entry name" value="Ribosomal_eL34"/>
</dbReference>
<dbReference type="InterPro" id="IPR038562">
    <property type="entry name" value="Ribosomal_eL34_C_sf"/>
</dbReference>
<dbReference type="InterPro" id="IPR047868">
    <property type="entry name" value="Ribosomal_L34e_arc-type"/>
</dbReference>
<dbReference type="NCBIfam" id="NF003143">
    <property type="entry name" value="PRK04059.1"/>
    <property type="match status" value="1"/>
</dbReference>
<dbReference type="PANTHER" id="PTHR10759">
    <property type="entry name" value="60S RIBOSOMAL PROTEIN L34"/>
    <property type="match status" value="1"/>
</dbReference>
<dbReference type="Pfam" id="PF01199">
    <property type="entry name" value="Ribosomal_L34e"/>
    <property type="match status" value="1"/>
</dbReference>
<dbReference type="PRINTS" id="PR01250">
    <property type="entry name" value="RIBOSOMALL34"/>
</dbReference>
<sequence>MPAPRFKSGSFKKISKRGPGNKTLTHHRRSKVSKAKCGACGALLNGVPRGRKIEIAKLSKTEKRPERPYGGFLCPKCLKRLMIEKARNL</sequence>